<keyword id="KW-0017">Alkaloid metabolism</keyword>
<keyword id="KW-0325">Glycoprotein</keyword>
<keyword id="KW-0521">NADP</keyword>
<keyword id="KW-0560">Oxidoreductase</keyword>
<keyword id="KW-0732">Signal</keyword>
<comment type="function">
    <text evidence="5 8 9 10 11 12 13 14 15 16 17 18 19 24 25">Chanoclavine-I dehydrogenase; part of the gene cluster that mediates the biosynthesis of fungal ergot alkaloid (PubMed:10071219, PubMed:14700635, PubMed:14732265, PubMed:15904941, PubMed:17308187, PubMed:17720822). DmaW catalyzes the first step of ergot alkaloid biosynthesis by condensing dimethylallyl diphosphate (DMAP) and tryptophan to form 4-dimethylallyl-L-tryptophan (PubMed:14732265). The second step is catalyzed by the methyltransferase easF that methylates 4-dimethylallyl-L-tryptophan in the presence of S-adenosyl-L-methionine, resulting in the formation of 4-dimethylallyl-L-abrine (By similarity). The catalase easC and the FAD-dependent oxidoreductase easE then transform 4-dimethylallyl-L-abrine to chanoclavine-I which is further oxidized by easD in the presence of NAD(+), resulting in the formation of chanoclavine-I aldehyde (PubMed:20118373, PubMed:21409592). Agroclavine dehydrogenase easG then mediates the conversion of chanoclavine-I aldehyde to agroclavine via a non-enzymatic adduct reaction: the substrate is an iminium intermediate that is formed spontaneously from chanoclavine-I aldehyde in the presence of glutathione (PubMed:20735127, PubMed:21494745). The presence of easA is not required to complete this reaction (PubMed:21494745). Further conversion of agroclavine to paspalic acid is a two-step process involving oxidation of agroclavine to elymoclavine and of elymoclavine to paspalic acid, the second step being performed by the elymoclavine oxidase cloA (PubMed:16538694, PubMed:17720822). Paspalic acid is then further converted to D-lysergic acid (PubMed:15904941). Ergopeptines are assembled from D-lysergic acid and three different amino acids by the D-lysergyl-peptide-synthetases composed each of a monomudular and a trimodular nonribosomal peptide synthetase subunit (PubMed:14700635, PubMed:15904941). LpsB and lpsC encode the monomodular subunits responsible for D-lysergic acid activation and incorporation into the ergopeptine backbone (PubMed:14700635). LpsA1 and A2 subunits encode the trimodular nonribosomal peptide synthetase assembling the tripeptide portion of ergopeptines (PubMed:14700635). LpsA1 is responsible for formation of the major ergopeptine, ergotamine, and lpsA2 for alpha-ergocryptine, the minor ergopeptine of the total alkaloid mixture elaborated by C.purpurea (PubMed:17560817, PubMed:19139103). D-lysergyl-tripeptides are assembled by the nonribosomal peptide synthetases and released as N-(D-lysergyl-aminoacyl)-lactams (PubMed:24361048). Cyclolization of the D-lysergyl-tripeptides is performed by the Fe(2+)/2-ketoglutarate-dependent dioxygenase easH which introduces a hydroxyl group into N-(D-lysergyl-aminoacyl)-lactam at alpha-C of the aminoacyl residue followed by spontaneous condensation with the terminal lactam carbonyl group (PubMed:24361048).</text>
</comment>
<comment type="catalytic activity">
    <reaction evidence="4">
        <text>chanoclavine-I + NAD(+) = chanoclavine-I aldehyde + NADH + H(+)</text>
        <dbReference type="Rhea" id="RHEA:33891"/>
        <dbReference type="ChEBI" id="CHEBI:15378"/>
        <dbReference type="ChEBI" id="CHEBI:57540"/>
        <dbReference type="ChEBI" id="CHEBI:57945"/>
        <dbReference type="ChEBI" id="CHEBI:71487"/>
        <dbReference type="ChEBI" id="CHEBI:72949"/>
        <dbReference type="EC" id="1.1.1.332"/>
    </reaction>
</comment>
<comment type="pathway">
    <text evidence="23">Alkaloid biosynthesis; ergot alkaloid biosynthesis.</text>
</comment>
<comment type="subunit">
    <text evidence="1">Homotetramer.</text>
</comment>
<comment type="similarity">
    <text evidence="22">Belongs to the short-chain dehydrogenases/reductases (SDR) family.</text>
</comment>
<dbReference type="EC" id="1.1.1.332" evidence="4"/>
<dbReference type="EMBL" id="AJ011966">
    <property type="protein sequence ID" value="CAB39316.1"/>
    <property type="molecule type" value="Genomic_DNA"/>
</dbReference>
<dbReference type="SMR" id="O94207"/>
<dbReference type="GlyCosmos" id="O94207">
    <property type="glycosylation" value="1 site, No reported glycans"/>
</dbReference>
<dbReference type="VEuPathDB" id="FungiDB:CPUR_04080"/>
<dbReference type="UniPathway" id="UPA00327"/>
<dbReference type="GO" id="GO:0016491">
    <property type="term" value="F:oxidoreductase activity"/>
    <property type="evidence" value="ECO:0007669"/>
    <property type="project" value="UniProtKB-KW"/>
</dbReference>
<dbReference type="GO" id="GO:0035835">
    <property type="term" value="P:indole alkaloid biosynthetic process"/>
    <property type="evidence" value="ECO:0007669"/>
    <property type="project" value="UniProtKB-UniPathway"/>
</dbReference>
<dbReference type="CDD" id="cd05233">
    <property type="entry name" value="SDR_c"/>
    <property type="match status" value="1"/>
</dbReference>
<dbReference type="Gene3D" id="3.40.50.720">
    <property type="entry name" value="NAD(P)-binding Rossmann-like Domain"/>
    <property type="match status" value="1"/>
</dbReference>
<dbReference type="InterPro" id="IPR036291">
    <property type="entry name" value="NAD(P)-bd_dom_sf"/>
</dbReference>
<dbReference type="InterPro" id="IPR002347">
    <property type="entry name" value="SDR_fam"/>
</dbReference>
<dbReference type="PANTHER" id="PTHR43180">
    <property type="entry name" value="3-OXOACYL-(ACYL-CARRIER-PROTEIN) REDUCTASE (AFU_ORTHOLOGUE AFUA_6G11210)"/>
    <property type="match status" value="1"/>
</dbReference>
<dbReference type="PANTHER" id="PTHR43180:SF63">
    <property type="entry name" value="DEHYDROGENASE_REDUCTASE FAMILY PROTEIN, PUTATIVE (AFU_ORTHOLOGUE AFUA_6G03520)-RELATED"/>
    <property type="match status" value="1"/>
</dbReference>
<dbReference type="Pfam" id="PF13561">
    <property type="entry name" value="adh_short_C2"/>
    <property type="match status" value="1"/>
</dbReference>
<dbReference type="PRINTS" id="PR00081">
    <property type="entry name" value="GDHRDH"/>
</dbReference>
<dbReference type="SUPFAM" id="SSF51735">
    <property type="entry name" value="NAD(P)-binding Rossmann-fold domains"/>
    <property type="match status" value="1"/>
</dbReference>
<accession>O94207</accession>
<evidence type="ECO:0000250" key="1">
    <source>
        <dbReference type="UniProtKB" id="D4AK45"/>
    </source>
</evidence>
<evidence type="ECO:0000250" key="2">
    <source>
        <dbReference type="UniProtKB" id="L0E2Z4"/>
    </source>
</evidence>
<evidence type="ECO:0000250" key="3">
    <source>
        <dbReference type="UniProtKB" id="O93868"/>
    </source>
</evidence>
<evidence type="ECO:0000250" key="4">
    <source>
        <dbReference type="UniProtKB" id="Q4WZ66"/>
    </source>
</evidence>
<evidence type="ECO:0000250" key="5">
    <source>
        <dbReference type="UniProtKB" id="Q50EL0"/>
    </source>
</evidence>
<evidence type="ECO:0000255" key="6"/>
<evidence type="ECO:0000255" key="7">
    <source>
        <dbReference type="PROSITE-ProRule" id="PRU00498"/>
    </source>
</evidence>
<evidence type="ECO:0000269" key="8">
    <source>
    </source>
</evidence>
<evidence type="ECO:0000269" key="9">
    <source>
    </source>
</evidence>
<evidence type="ECO:0000269" key="10">
    <source>
    </source>
</evidence>
<evidence type="ECO:0000269" key="11">
    <source>
    </source>
</evidence>
<evidence type="ECO:0000269" key="12">
    <source>
    </source>
</evidence>
<evidence type="ECO:0000269" key="13">
    <source>
    </source>
</evidence>
<evidence type="ECO:0000269" key="14">
    <source>
    </source>
</evidence>
<evidence type="ECO:0000269" key="15">
    <source>
    </source>
</evidence>
<evidence type="ECO:0000269" key="16">
    <source>
    </source>
</evidence>
<evidence type="ECO:0000269" key="17">
    <source>
    </source>
</evidence>
<evidence type="ECO:0000269" key="18">
    <source>
    </source>
</evidence>
<evidence type="ECO:0000269" key="19">
    <source>
    </source>
</evidence>
<evidence type="ECO:0000303" key="20">
    <source>
    </source>
</evidence>
<evidence type="ECO:0000303" key="21">
    <source>
    </source>
</evidence>
<evidence type="ECO:0000305" key="22"/>
<evidence type="ECO:0000305" key="23">
    <source>
    </source>
</evidence>
<evidence type="ECO:0000305" key="24">
    <source>
    </source>
</evidence>
<evidence type="ECO:0000305" key="25">
    <source>
    </source>
</evidence>
<organism>
    <name type="scientific">Claviceps purpurea</name>
    <name type="common">Ergot fungus</name>
    <name type="synonym">Sphacelia segetum</name>
    <dbReference type="NCBI Taxonomy" id="5111"/>
    <lineage>
        <taxon>Eukaryota</taxon>
        <taxon>Fungi</taxon>
        <taxon>Dikarya</taxon>
        <taxon>Ascomycota</taxon>
        <taxon>Pezizomycotina</taxon>
        <taxon>Sordariomycetes</taxon>
        <taxon>Hypocreomycetidae</taxon>
        <taxon>Hypocreales</taxon>
        <taxon>Clavicipitaceae</taxon>
        <taxon>Claviceps</taxon>
    </lineage>
</organism>
<feature type="signal peptide" evidence="6">
    <location>
        <begin position="1"/>
        <end position="20"/>
    </location>
</feature>
<feature type="chain" id="PRO_0000439127" description="Chanoclavine-I dehydrogenase easD">
    <location>
        <begin position="21"/>
        <end position="261"/>
    </location>
</feature>
<feature type="active site" description="Proton donor" evidence="3">
    <location>
        <position position="166"/>
    </location>
</feature>
<feature type="active site" description="Lowers pKa of active site Tyr" evidence="3">
    <location>
        <position position="170"/>
    </location>
</feature>
<feature type="binding site" evidence="2">
    <location>
        <position position="18"/>
    </location>
    <ligand>
        <name>NADP(+)</name>
        <dbReference type="ChEBI" id="CHEBI:58349"/>
    </ligand>
</feature>
<feature type="binding site" evidence="2">
    <location>
        <position position="66"/>
    </location>
    <ligand>
        <name>NADP(+)</name>
        <dbReference type="ChEBI" id="CHEBI:58349"/>
    </ligand>
</feature>
<feature type="binding site" evidence="2">
    <location>
        <position position="132"/>
    </location>
    <ligand>
        <name>NADP(+)</name>
        <dbReference type="ChEBI" id="CHEBI:58349"/>
    </ligand>
</feature>
<feature type="binding site" evidence="3">
    <location>
        <position position="166"/>
    </location>
    <ligand>
        <name>NADP(+)</name>
        <dbReference type="ChEBI" id="CHEBI:58349"/>
    </ligand>
</feature>
<feature type="binding site" evidence="3">
    <location>
        <position position="170"/>
    </location>
    <ligand>
        <name>NADP(+)</name>
        <dbReference type="ChEBI" id="CHEBI:58349"/>
    </ligand>
</feature>
<feature type="binding site" evidence="2">
    <location>
        <position position="201"/>
    </location>
    <ligand>
        <name>NADP(+)</name>
        <dbReference type="ChEBI" id="CHEBI:58349"/>
    </ligand>
</feature>
<feature type="glycosylation site" description="N-linked (GlcNAc...) asparagine" evidence="7">
    <location>
        <position position="43"/>
    </location>
</feature>
<protein>
    <recommendedName>
        <fullName evidence="4">Chanoclavine-I dehydrogenase easD</fullName>
        <shortName evidence="4">ChaDH</shortName>
        <ecNumber evidence="4">1.1.1.332</ecNumber>
    </recommendedName>
    <alternativeName>
        <fullName evidence="21">Ergot alkaloid synthesis protein D</fullName>
    </alternativeName>
    <alternativeName>
        <fullName evidence="20">Oxidoreductase 2</fullName>
    </alternativeName>
</protein>
<reference key="1">
    <citation type="journal article" date="1999" name="Mol. Gen. Genet.">
        <title>Evidence for an ergot alkaloid gene cluster in Claviceps purpurea.</title>
        <authorList>
            <person name="Tudzynski P."/>
            <person name="Hoelter K."/>
            <person name="Correia T.H."/>
            <person name="Arntz C."/>
            <person name="Grammel N."/>
            <person name="Keller U."/>
        </authorList>
    </citation>
    <scope>NUCLEOTIDE SEQUENCE [GENOMIC DNA]</scope>
    <scope>FUNCTION</scope>
    <scope>IDENTIFICATION IN THE EAS CLUSTER</scope>
    <source>
        <strain>P1 / 1029/N5</strain>
    </source>
</reference>
<reference key="2">
    <citation type="journal article" date="2001" name="Appl. Microbiol. Biotechnol.">
        <title>Biotechnology and genetics of ergot alkaloids.</title>
        <authorList>
            <person name="Tudzynski P."/>
            <person name="Correia T."/>
            <person name="Keller U."/>
        </authorList>
    </citation>
    <scope>BIOTECHNOLOGY</scope>
    <source>
        <strain>P1 / 1029/N5</strain>
    </source>
</reference>
<reference key="3">
    <citation type="journal article" date="2003" name="Chem. Biol.">
        <title>Molecular cloning and analysis of the ergopeptine assembly system in the ergot fungus Claviceps purpurea.</title>
        <authorList>
            <person name="Correia T."/>
            <person name="Grammel N."/>
            <person name="Ortel I."/>
            <person name="Keller U."/>
            <person name="Tudzynski P."/>
        </authorList>
    </citation>
    <scope>FUNCTION</scope>
</reference>
<reference key="4">
    <citation type="journal article" date="2004" name="Fungal Genet. Biol.">
        <title>The determinant step in ergot alkaloid biosynthesis by an endophyte of perennial ryegrass.</title>
        <authorList>
            <person name="Wang J."/>
            <person name="Machado C."/>
            <person name="Panaccione D.G."/>
            <person name="Tsai H.-F."/>
            <person name="Schardl C.L."/>
        </authorList>
    </citation>
    <scope>FUNCTION</scope>
    <source>
        <strain>ATCC 20102 / Farmitalia FI 32/17</strain>
    </source>
</reference>
<reference key="5">
    <citation type="journal article" date="2005" name="Phytochemistry">
        <title>The ergot alkaloid gene cluster in Claviceps purpurea: extension of the cluster sequence and intra species evolution.</title>
        <authorList>
            <person name="Haarmann T."/>
            <person name="Machado C."/>
            <person name="Lubbe Y."/>
            <person name="Correia T."/>
            <person name="Schardl C.L."/>
            <person name="Panaccione D.G."/>
            <person name="Tudzynski P."/>
        </authorList>
    </citation>
    <scope>FUNCTION</scope>
    <scope>IDENTIFICATION IN THE EAS CLUSTER</scope>
</reference>
<reference key="6">
    <citation type="journal article" date="2006" name="ChemBioChem">
        <title>Identification of the cytochrome P450 monooxygenase that bridges the clavine and ergoline alkaloid pathways.</title>
        <authorList>
            <person name="Haarmann T."/>
            <person name="Ortel I."/>
            <person name="Tudzynski P."/>
            <person name="Keller U."/>
        </authorList>
    </citation>
    <scope>FUNCTION</scope>
    <source>
        <strain>P1 / 1029/N5</strain>
    </source>
</reference>
<reference key="7">
    <citation type="journal article" date="2007" name="Appl. Environ. Microbiol.">
        <title>A complex ergovaline gene cluster in epichloe endophytes of grasses.</title>
        <authorList>
            <person name="Fleetwood D.J."/>
            <person name="Scott B."/>
            <person name="Lane G.A."/>
            <person name="Tanaka A."/>
            <person name="Johnson R.D."/>
        </authorList>
    </citation>
    <scope>FUNCTION</scope>
</reference>
<reference key="8">
    <citation type="journal article" date="2007" name="Appl. Environ. Microbiol.">
        <title>Comparison of ergot alkaloid biosynthesis gene clusters in Claviceps species indicates loss of late pathway steps in evolution of C. fusiformis.</title>
        <authorList>
            <person name="Lorenz N."/>
            <person name="Wilson E.V."/>
            <person name="Machado C."/>
            <person name="Schardl C.L."/>
            <person name="Tudzynski P."/>
        </authorList>
    </citation>
    <scope>FUNCTION</scope>
</reference>
<reference key="9">
    <citation type="journal article" date="2008" name="Fungal Genet. Biol.">
        <title>Use of a nonhomologous end joining deficient strain (Deltaku70) of the ergot fungus Claviceps purpurea for identification of a nonribosomal peptide synthetase gene involved in ergotamine biosynthesis.</title>
        <authorList>
            <person name="Haarmann T."/>
            <person name="Lorenz N."/>
            <person name="Tudzynski P."/>
        </authorList>
    </citation>
    <scope>FUNCTION</scope>
</reference>
<reference key="10">
    <citation type="journal article" date="2009" name="J. Biol. Chem.">
        <title>Combinatorial assembly of simple and complex D-lysergic acid alkaloid peptide classes in the ergot fungus Claviceps purpurea.</title>
        <authorList>
            <person name="Ortel I."/>
            <person name="Keller U."/>
        </authorList>
    </citation>
    <scope>FUNCTION</scope>
</reference>
<reference key="11">
    <citation type="journal article" date="2010" name="Appl. Environ. Microbiol.">
        <title>Alkaloid cluster gene ccsA of the ergot fungus Claviceps purpurea encodes chanoclavine I synthase, a flavin adenine dinucleotide-containing oxidoreductase mediating the transformation of N-methyl-dimethylallyltryptophan to chanoclavine I.</title>
        <authorList>
            <person name="Lorenz N."/>
            <person name="Olsovska J."/>
            <person name="Sulc M."/>
            <person name="Tudzynski P."/>
        </authorList>
    </citation>
    <scope>FUNCTION</scope>
</reference>
<reference key="12">
    <citation type="journal article" date="2010" name="J. Am. Chem. Soc.">
        <title>Controlling a structural branch point in ergot alkaloid biosynthesis.</title>
        <authorList>
            <person name="Cheng J.Z."/>
            <person name="Coyle C.M."/>
            <person name="Panaccione D.G."/>
            <person name="O'Connor S.E."/>
        </authorList>
    </citation>
    <scope>FUNCTION</scope>
    <source>
        <strain>ATCC 20102 / Farmitalia FI 32/17</strain>
    </source>
</reference>
<reference key="13">
    <citation type="journal article" date="2011" name="Curr. Genet.">
        <title>Ergot cluster-encoded catalase is required for synthesis of chanoclavine-I in Aspergillus fumigatus.</title>
        <authorList>
            <person name="Goetz K.E."/>
            <person name="Coyle C.M."/>
            <person name="Cheng J.Z."/>
            <person name="O'Connor S.E."/>
            <person name="Panaccione D.G."/>
        </authorList>
    </citation>
    <scope>FUNCTION</scope>
</reference>
<reference key="14">
    <citation type="journal article" date="2011" name="Org. Biomol. Chem.">
        <title>New insights into ergot alkaloid biosynthesis in Claviceps purpurea: an agroclavine synthase EasG catalyses, via a non-enzymatic adduct with reduced glutathione, the conversion of chanoclavine-I aldehyde to agroclavine.</title>
        <authorList>
            <person name="Matuschek M."/>
            <person name="Wallwey C."/>
            <person name="Xie X."/>
            <person name="Li S.M."/>
        </authorList>
    </citation>
    <scope>FUNCTION</scope>
</reference>
<reference key="15">
    <citation type="journal article" date="2014" name="Chem. Biol.">
        <title>Cyclolization of D-lysergic acid alkaloid peptides.</title>
        <authorList>
            <person name="Havemann J."/>
            <person name="Vogel D."/>
            <person name="Loll B."/>
            <person name="Keller U."/>
        </authorList>
    </citation>
    <scope>FUNCTION</scope>
</reference>
<gene>
    <name evidence="21" type="primary">easD</name>
    <name evidence="20" type="synonym">cpox2</name>
</gene>
<name>EASD_CLAPU</name>
<proteinExistence type="inferred from homology"/>
<sequence length="261" mass="27619">MPSMTSKVFAITGGASGIGAATCRLLAERDAAVICLADVSSTNFTSLQESIAKSNPSTLVHCTELDVRSADKVDQWLQSIVSTHGDLHGAANVAGIAQGAGLRATPTILEENDAEWSRILDVNLNGVFYSTRAQVRVMKDLPPGHRSIVNVASIAAFSHVPDVYAYGTSKSACAYLTTCIAADVFWSGIRVNCVSPGITNTPMLPQFEPKAKSLDAIKDMYRDQGYPTGEADGVARTIVWLLSEDSIPVYGANINVGACPP</sequence>